<proteinExistence type="evidence at transcript level"/>
<accession>B6CZ46</accession>
<accession>B6CZ47</accession>
<dbReference type="EC" id="2.1.1.6" evidence="1"/>
<dbReference type="EMBL" id="EU627077">
    <property type="protein sequence ID" value="ACF40887.1"/>
    <property type="status" value="ALT_FRAME"/>
    <property type="molecule type" value="mRNA"/>
</dbReference>
<dbReference type="EMBL" id="EU627078">
    <property type="protein sequence ID" value="ACF40888.1"/>
    <property type="status" value="ALT_FRAME"/>
    <property type="molecule type" value="mRNA"/>
</dbReference>
<dbReference type="RefSeq" id="NP_001129574.1">
    <property type="nucleotide sequence ID" value="NM_001136102.1"/>
</dbReference>
<dbReference type="SMR" id="B6CZ46"/>
<dbReference type="FunCoup" id="B6CZ46">
    <property type="interactions" value="194"/>
</dbReference>
<dbReference type="STRING" id="9544.ENSMMUP00000058789"/>
<dbReference type="GeneID" id="718286"/>
<dbReference type="CTD" id="220074"/>
<dbReference type="InParanoid" id="B6CZ46"/>
<dbReference type="OrthoDB" id="186626at2759"/>
<dbReference type="Proteomes" id="UP000006718">
    <property type="component" value="Unassembled WGS sequence"/>
</dbReference>
<dbReference type="GO" id="GO:0045177">
    <property type="term" value="C:apical part of cell"/>
    <property type="evidence" value="ECO:0000250"/>
    <property type="project" value="UniProtKB"/>
</dbReference>
<dbReference type="GO" id="GO:0005737">
    <property type="term" value="C:cytoplasm"/>
    <property type="evidence" value="ECO:0000250"/>
    <property type="project" value="UniProtKB"/>
</dbReference>
<dbReference type="GO" id="GO:0005783">
    <property type="term" value="C:endoplasmic reticulum"/>
    <property type="evidence" value="ECO:0000250"/>
    <property type="project" value="UniProtKB"/>
</dbReference>
<dbReference type="GO" id="GO:0016020">
    <property type="term" value="C:membrane"/>
    <property type="evidence" value="ECO:0007669"/>
    <property type="project" value="UniProtKB-SubCell"/>
</dbReference>
<dbReference type="GO" id="GO:0016206">
    <property type="term" value="F:catechol O-methyltransferase activity"/>
    <property type="evidence" value="ECO:0000250"/>
    <property type="project" value="UniProtKB"/>
</dbReference>
<dbReference type="GO" id="GO:0042424">
    <property type="term" value="P:catecholamine catabolic process"/>
    <property type="evidence" value="ECO:0000250"/>
    <property type="project" value="UniProtKB"/>
</dbReference>
<dbReference type="GO" id="GO:0032502">
    <property type="term" value="P:developmental process"/>
    <property type="evidence" value="ECO:0000318"/>
    <property type="project" value="GO_Central"/>
</dbReference>
<dbReference type="GO" id="GO:0042417">
    <property type="term" value="P:dopamine metabolic process"/>
    <property type="evidence" value="ECO:0000318"/>
    <property type="project" value="GO_Central"/>
</dbReference>
<dbReference type="GO" id="GO:0032259">
    <property type="term" value="P:methylation"/>
    <property type="evidence" value="ECO:0007669"/>
    <property type="project" value="UniProtKB-KW"/>
</dbReference>
<dbReference type="GO" id="GO:0007605">
    <property type="term" value="P:sensory perception of sound"/>
    <property type="evidence" value="ECO:0007669"/>
    <property type="project" value="UniProtKB-KW"/>
</dbReference>
<dbReference type="CDD" id="cd02440">
    <property type="entry name" value="AdoMet_MTases"/>
    <property type="match status" value="1"/>
</dbReference>
<dbReference type="FunFam" id="3.40.50.150:FF:000054">
    <property type="entry name" value="Catechol O-methyltransferase"/>
    <property type="match status" value="1"/>
</dbReference>
<dbReference type="Gene3D" id="3.40.50.150">
    <property type="entry name" value="Vaccinia Virus protein VP39"/>
    <property type="match status" value="1"/>
</dbReference>
<dbReference type="InterPro" id="IPR029063">
    <property type="entry name" value="SAM-dependent_MTases_sf"/>
</dbReference>
<dbReference type="InterPro" id="IPR002935">
    <property type="entry name" value="SAM_O-MeTrfase"/>
</dbReference>
<dbReference type="PANTHER" id="PTHR43836">
    <property type="entry name" value="CATECHOL O-METHYLTRANSFERASE 1-RELATED"/>
    <property type="match status" value="1"/>
</dbReference>
<dbReference type="PANTHER" id="PTHR43836:SF1">
    <property type="entry name" value="TRANSMEMBRANE O-METHYLTRANSFERASE"/>
    <property type="match status" value="1"/>
</dbReference>
<dbReference type="Pfam" id="PF01596">
    <property type="entry name" value="Methyltransf_3"/>
    <property type="match status" value="1"/>
</dbReference>
<dbReference type="SUPFAM" id="SSF53335">
    <property type="entry name" value="S-adenosyl-L-methionine-dependent methyltransferases"/>
    <property type="match status" value="1"/>
</dbReference>
<dbReference type="PROSITE" id="PS51682">
    <property type="entry name" value="SAM_OMT_I"/>
    <property type="match status" value="1"/>
</dbReference>
<sequence>MGTPWRKRKGIAGPGLPNLSCALVLCLSRSQPRTQVGTMSPAIALAFLPLVVTLLVRYRHYFRLLVGTVLLRSLRDCLSGLRIEERAFSYVLTHALPGDPGHILTTLDHWSSHCEYLSHMGPVKGQILMRLVEEKAPACVLELGTYCGYSTLLIAQALPPGGRLLTVERDPRTAAVAEKLIRLAGFDEHMVELIVGSSEEVIPCLRTQYQLSRADLVLLIHRPRCYLRDLQLLEAHALLPAGATVLADHVLFPGAPRFLQYAKSCGRYRCRLYHTGLPDFPAIKDGIAQLTYAGPG</sequence>
<keyword id="KW-0025">Alternative splicing</keyword>
<keyword id="KW-0128">Catecholamine metabolism</keyword>
<keyword id="KW-0963">Cytoplasm</keyword>
<keyword id="KW-0209">Deafness</keyword>
<keyword id="KW-0256">Endoplasmic reticulum</keyword>
<keyword id="KW-1009">Hearing</keyword>
<keyword id="KW-0472">Membrane</keyword>
<keyword id="KW-0489">Methyltransferase</keyword>
<keyword id="KW-0531">Neurotransmitter degradation</keyword>
<keyword id="KW-1185">Reference proteome</keyword>
<keyword id="KW-0949">S-adenosyl-L-methionine</keyword>
<keyword id="KW-0808">Transferase</keyword>
<keyword id="KW-0812">Transmembrane</keyword>
<keyword id="KW-1133">Transmembrane helix</keyword>
<comment type="function">
    <text evidence="1 2">Catalyzes the O-methylation, and thereby the inactivation, of catecholamine neurotransmitters and catechol hormones (By similarity). Required for auditory function (By similarity). Component of the cochlear hair cell's mechanotransduction (MET) machinery. Involved in the assembly of the asymmetric tip-link MET complex. Required for transportation of TMC1 and TMC2 proteins into the mechanically sensitive stereocilia of the hair cells. The function in MET is independent of the enzymatic activity (By similarity).</text>
</comment>
<comment type="catalytic activity">
    <reaction evidence="1">
        <text>a catechol + S-adenosyl-L-methionine = a guaiacol + S-adenosyl-L-homocysteine + H(+)</text>
        <dbReference type="Rhea" id="RHEA:17877"/>
        <dbReference type="ChEBI" id="CHEBI:15378"/>
        <dbReference type="ChEBI" id="CHEBI:33566"/>
        <dbReference type="ChEBI" id="CHEBI:57856"/>
        <dbReference type="ChEBI" id="CHEBI:59789"/>
        <dbReference type="ChEBI" id="CHEBI:134251"/>
        <dbReference type="EC" id="2.1.1.6"/>
    </reaction>
    <physiologicalReaction direction="left-to-right" evidence="1">
        <dbReference type="Rhea" id="RHEA:17878"/>
    </physiologicalReaction>
</comment>
<comment type="subunit">
    <text evidence="1">Interacts with LHFPL5, PCDH15, TMC1, TMC2 and TMIE. Interacts directly with TMC1. The interaction of TOMT with TMC1 and TMC2 is required for the transportation of TMC1/2 into the stereocilia of hair cells.</text>
</comment>
<comment type="subcellular location">
    <molecule>Isoform 1</molecule>
    <subcellularLocation>
        <location evidence="3">Membrane</location>
        <topology evidence="3">Single-pass membrane protein</topology>
    </subcellularLocation>
</comment>
<comment type="subcellular location">
    <molecule>Isoform 2</molecule>
    <subcellularLocation>
        <location evidence="1">Cytoplasm</location>
    </subcellularLocation>
    <subcellularLocation>
        <location evidence="1">Endoplasmic reticulum</location>
    </subcellularLocation>
    <text evidence="1">Localized to the cell body of the cochlear hair cells, but is not present in the stereocilia. Present but not restricted to the apical cistern, Hensen's body and the subsurface cistern.</text>
</comment>
<comment type="alternative products">
    <event type="alternative splicing"/>
    <isoform>
        <id>B6CZ46-1</id>
        <name evidence="5">1</name>
        <name evidence="5">B</name>
        <sequence type="displayed"/>
    </isoform>
    <isoform>
        <id>B6CZ46-2</id>
        <name evidence="5">2</name>
        <name evidence="5">C</name>
        <sequence type="described" ref="VSP_053068"/>
    </isoform>
</comment>
<comment type="miscellaneous">
    <text evidence="6">LRRC51 and TOMT were originally considered as alternative reading frames, LRTOMT1 and LRTOMT2 of the same LRTOMT gene in primates.</text>
</comment>
<comment type="similarity">
    <text evidence="4">Belongs to the class I-like SAM-binding methyltransferase superfamily. Cation-dependent O-methyltransferase family.</text>
</comment>
<comment type="sequence caution" evidence="7">
    <conflict type="frameshift">
        <sequence resource="EMBL-CDS" id="ACF40887"/>
    </conflict>
</comment>
<comment type="sequence caution" evidence="7">
    <conflict type="frameshift">
        <sequence resource="EMBL-CDS" id="ACF40888"/>
    </conflict>
</comment>
<name>TOMT_MACMU</name>
<feature type="chain" id="PRO_0000372486" description="Transmembrane O-methyltransferase">
    <location>
        <begin position="1"/>
        <end position="296"/>
    </location>
</feature>
<feature type="transmembrane region" description="Helical" evidence="3">
    <location>
        <begin position="36"/>
        <end position="56"/>
    </location>
</feature>
<feature type="binding site" evidence="4">
    <location>
        <position position="142"/>
    </location>
    <ligand>
        <name>S-adenosyl-L-methionine</name>
        <dbReference type="ChEBI" id="CHEBI:59789"/>
    </ligand>
</feature>
<feature type="binding site" evidence="4">
    <location>
        <begin position="144"/>
        <end position="145"/>
    </location>
    <ligand>
        <name>S-adenosyl-L-methionine</name>
        <dbReference type="ChEBI" id="CHEBI:59789"/>
    </ligand>
</feature>
<feature type="binding site" evidence="4">
    <location>
        <position position="150"/>
    </location>
    <ligand>
        <name>S-adenosyl-L-methionine</name>
        <dbReference type="ChEBI" id="CHEBI:59789"/>
    </ligand>
</feature>
<feature type="binding site" evidence="4">
    <location>
        <position position="168"/>
    </location>
    <ligand>
        <name>S-adenosyl-L-methionine</name>
        <dbReference type="ChEBI" id="CHEBI:59789"/>
    </ligand>
</feature>
<feature type="binding site" evidence="4">
    <location>
        <position position="198"/>
    </location>
    <ligand>
        <name>S-adenosyl-L-methionine</name>
        <dbReference type="ChEBI" id="CHEBI:59789"/>
    </ligand>
</feature>
<feature type="splice variant" id="VSP_053068" description="In isoform 2." evidence="6">
    <location>
        <begin position="11"/>
        <end position="32"/>
    </location>
</feature>
<gene>
    <name evidence="2" type="primary">TOMT</name>
    <name evidence="2" type="synonym">COMT2</name>
    <name evidence="6" type="synonym">LRTOMT</name>
</gene>
<organism>
    <name type="scientific">Macaca mulatta</name>
    <name type="common">Rhesus macaque</name>
    <dbReference type="NCBI Taxonomy" id="9544"/>
    <lineage>
        <taxon>Eukaryota</taxon>
        <taxon>Metazoa</taxon>
        <taxon>Chordata</taxon>
        <taxon>Craniata</taxon>
        <taxon>Vertebrata</taxon>
        <taxon>Euteleostomi</taxon>
        <taxon>Mammalia</taxon>
        <taxon>Eutheria</taxon>
        <taxon>Euarchontoglires</taxon>
        <taxon>Primates</taxon>
        <taxon>Haplorrhini</taxon>
        <taxon>Catarrhini</taxon>
        <taxon>Cercopithecidae</taxon>
        <taxon>Cercopithecinae</taxon>
        <taxon>Macaca</taxon>
    </lineage>
</organism>
<protein>
    <recommendedName>
        <fullName evidence="1">Transmembrane O-methyltransferase</fullName>
        <ecNumber evidence="1">2.1.1.6</ecNumber>
    </recommendedName>
    <alternativeName>
        <fullName evidence="2">Catechol O-methyltransferase 2</fullName>
    </alternativeName>
    <alternativeName>
        <fullName evidence="6">Protein LRTOMT2</fullName>
    </alternativeName>
</protein>
<reference evidence="7 8" key="1">
    <citation type="journal article" date="2008" name="Nat. Genet.">
        <title>Mutations of LRTOMT, a fusion gene with alternative reading frames, cause nonsyndromic deafness in humans.</title>
        <authorList>
            <person name="Ahmed Z.M."/>
            <person name="Masmoudi S."/>
            <person name="Kalay E."/>
            <person name="Belyantseva I.A."/>
            <person name="Mosrati M.A."/>
            <person name="Collin R.W.J."/>
            <person name="Riazuddin S."/>
            <person name="Hmani-Aifa M."/>
            <person name="Venselaar H."/>
            <person name="Kawar M.N."/>
            <person name="Tlili A."/>
            <person name="van der Zwaag B."/>
            <person name="Khan S.Y."/>
            <person name="Ayadi L."/>
            <person name="Riazuddin S.A."/>
            <person name="Morell R.J."/>
            <person name="Griffith A.J."/>
            <person name="Charfedine I."/>
            <person name="Caylan R."/>
            <person name="Oostrik J."/>
            <person name="Karaguzel A."/>
            <person name="Ghorbel A."/>
            <person name="Riazuddin S."/>
            <person name="Friedman T.B."/>
            <person name="Ayadi H."/>
            <person name="Kremer H."/>
        </authorList>
    </citation>
    <scope>NUCLEOTIDE SEQUENCE [MRNA] (ISOFORMS 1 AND 2)</scope>
    <source>
        <tissue evidence="8">Brain</tissue>
    </source>
</reference>
<evidence type="ECO:0000250" key="1">
    <source>
        <dbReference type="UniProtKB" id="A1Y9I9"/>
    </source>
</evidence>
<evidence type="ECO:0000250" key="2">
    <source>
        <dbReference type="UniProtKB" id="Q8WZ04"/>
    </source>
</evidence>
<evidence type="ECO:0000255" key="3"/>
<evidence type="ECO:0000255" key="4">
    <source>
        <dbReference type="PROSITE-ProRule" id="PRU01019"/>
    </source>
</evidence>
<evidence type="ECO:0000269" key="5">
    <source>
    </source>
</evidence>
<evidence type="ECO:0000303" key="6">
    <source>
    </source>
</evidence>
<evidence type="ECO:0000305" key="7"/>
<evidence type="ECO:0000312" key="8">
    <source>
        <dbReference type="EMBL" id="ACF40887.1"/>
    </source>
</evidence>